<sequence length="308" mass="33808">MPQDKLRIATRRSPLAMWQAEHVAAELRRHHPGLEVELVPMVTRGDRILDQALSRIGGKGLFIKELEQGMEEGRADLAVHSMKDVPWRMPDGFALPVILERHEPTDAFVSNHYRRLDDLPEGGHLGTASLRRQCQAKARRPDLRVSTLRGNVNTRLAKLDAGEFDAIILAASGLSRLGFDERIARRLPPEESLPAVGQGALGIECLAEDRRVQELVAPLDHGPTHTLLKAERAMNARLQGSCQVPIAGYACYQGEEIWLRGLVGSPDGQEIVRGEVRGPIAQAAELGDRLGGELLERGAARILADLAD</sequence>
<accession>Q0A577</accession>
<reference key="1">
    <citation type="submission" date="2006-08" db="EMBL/GenBank/DDBJ databases">
        <title>Complete sequence of Alkalilimnicola ehrilichei MLHE-1.</title>
        <authorList>
            <person name="Copeland A."/>
            <person name="Lucas S."/>
            <person name="Lapidus A."/>
            <person name="Barry K."/>
            <person name="Detter J.C."/>
            <person name="Glavina del Rio T."/>
            <person name="Hammon N."/>
            <person name="Israni S."/>
            <person name="Dalin E."/>
            <person name="Tice H."/>
            <person name="Pitluck S."/>
            <person name="Sims D."/>
            <person name="Brettin T."/>
            <person name="Bruce D."/>
            <person name="Han C."/>
            <person name="Tapia R."/>
            <person name="Gilna P."/>
            <person name="Schmutz J."/>
            <person name="Larimer F."/>
            <person name="Land M."/>
            <person name="Hauser L."/>
            <person name="Kyrpides N."/>
            <person name="Mikhailova N."/>
            <person name="Oremland R.S."/>
            <person name="Hoeft S.E."/>
            <person name="Switzer-Blum J."/>
            <person name="Kulp T."/>
            <person name="King G."/>
            <person name="Tabita R."/>
            <person name="Witte B."/>
            <person name="Santini J.M."/>
            <person name="Basu P."/>
            <person name="Hollibaugh J.T."/>
            <person name="Xie G."/>
            <person name="Stolz J.F."/>
            <person name="Richardson P."/>
        </authorList>
    </citation>
    <scope>NUCLEOTIDE SEQUENCE [LARGE SCALE GENOMIC DNA]</scope>
    <source>
        <strain>ATCC BAA-1101 / DSM 17681 / MLHE-1</strain>
    </source>
</reference>
<proteinExistence type="inferred from homology"/>
<organism>
    <name type="scientific">Alkalilimnicola ehrlichii (strain ATCC BAA-1101 / DSM 17681 / MLHE-1)</name>
    <dbReference type="NCBI Taxonomy" id="187272"/>
    <lineage>
        <taxon>Bacteria</taxon>
        <taxon>Pseudomonadati</taxon>
        <taxon>Pseudomonadota</taxon>
        <taxon>Gammaproteobacteria</taxon>
        <taxon>Chromatiales</taxon>
        <taxon>Ectothiorhodospiraceae</taxon>
        <taxon>Alkalilimnicola</taxon>
    </lineage>
</organism>
<keyword id="KW-0627">Porphyrin biosynthesis</keyword>
<keyword id="KW-1185">Reference proteome</keyword>
<keyword id="KW-0808">Transferase</keyword>
<protein>
    <recommendedName>
        <fullName evidence="1">Porphobilinogen deaminase</fullName>
        <shortName evidence="1">PBG</shortName>
        <ecNumber evidence="1">2.5.1.61</ecNumber>
    </recommendedName>
    <alternativeName>
        <fullName evidence="1">Hydroxymethylbilane synthase</fullName>
        <shortName evidence="1">HMBS</shortName>
    </alternativeName>
    <alternativeName>
        <fullName evidence="1">Pre-uroporphyrinogen synthase</fullName>
    </alternativeName>
</protein>
<feature type="chain" id="PRO_1000114131" description="Porphobilinogen deaminase">
    <location>
        <begin position="1"/>
        <end position="308"/>
    </location>
</feature>
<feature type="modified residue" description="S-(dipyrrolylmethanemethyl)cysteine" evidence="1">
    <location>
        <position position="242"/>
    </location>
</feature>
<comment type="function">
    <text evidence="1">Tetrapolymerization of the monopyrrole PBG into the hydroxymethylbilane pre-uroporphyrinogen in several discrete steps.</text>
</comment>
<comment type="catalytic activity">
    <reaction evidence="1">
        <text>4 porphobilinogen + H2O = hydroxymethylbilane + 4 NH4(+)</text>
        <dbReference type="Rhea" id="RHEA:13185"/>
        <dbReference type="ChEBI" id="CHEBI:15377"/>
        <dbReference type="ChEBI" id="CHEBI:28938"/>
        <dbReference type="ChEBI" id="CHEBI:57845"/>
        <dbReference type="ChEBI" id="CHEBI:58126"/>
        <dbReference type="EC" id="2.5.1.61"/>
    </reaction>
</comment>
<comment type="cofactor">
    <cofactor evidence="1">
        <name>dipyrromethane</name>
        <dbReference type="ChEBI" id="CHEBI:60342"/>
    </cofactor>
    <text evidence="1">Binds 1 dipyrromethane group covalently.</text>
</comment>
<comment type="pathway">
    <text evidence="1">Porphyrin-containing compound metabolism; protoporphyrin-IX biosynthesis; coproporphyrinogen-III from 5-aminolevulinate: step 2/4.</text>
</comment>
<comment type="subunit">
    <text evidence="1">Monomer.</text>
</comment>
<comment type="miscellaneous">
    <text evidence="1">The porphobilinogen subunits are added to the dipyrromethane group.</text>
</comment>
<comment type="similarity">
    <text evidence="1">Belongs to the HMBS family.</text>
</comment>
<name>HEM3_ALKEH</name>
<gene>
    <name evidence="1" type="primary">hemC</name>
    <name type="ordered locus">Mlg_2670</name>
</gene>
<evidence type="ECO:0000255" key="1">
    <source>
        <dbReference type="HAMAP-Rule" id="MF_00260"/>
    </source>
</evidence>
<dbReference type="EC" id="2.5.1.61" evidence="1"/>
<dbReference type="EMBL" id="CP000453">
    <property type="protein sequence ID" value="ABI58010.1"/>
    <property type="molecule type" value="Genomic_DNA"/>
</dbReference>
<dbReference type="RefSeq" id="WP_011630403.1">
    <property type="nucleotide sequence ID" value="NC_008340.1"/>
</dbReference>
<dbReference type="SMR" id="Q0A577"/>
<dbReference type="KEGG" id="aeh:Mlg_2670"/>
<dbReference type="eggNOG" id="COG0181">
    <property type="taxonomic scope" value="Bacteria"/>
</dbReference>
<dbReference type="HOGENOM" id="CLU_019704_0_2_6"/>
<dbReference type="OrthoDB" id="9810298at2"/>
<dbReference type="UniPathway" id="UPA00251">
    <property type="reaction ID" value="UER00319"/>
</dbReference>
<dbReference type="Proteomes" id="UP000001962">
    <property type="component" value="Chromosome"/>
</dbReference>
<dbReference type="GO" id="GO:0005737">
    <property type="term" value="C:cytoplasm"/>
    <property type="evidence" value="ECO:0007669"/>
    <property type="project" value="TreeGrafter"/>
</dbReference>
<dbReference type="GO" id="GO:0004418">
    <property type="term" value="F:hydroxymethylbilane synthase activity"/>
    <property type="evidence" value="ECO:0007669"/>
    <property type="project" value="UniProtKB-UniRule"/>
</dbReference>
<dbReference type="GO" id="GO:0006782">
    <property type="term" value="P:protoporphyrinogen IX biosynthetic process"/>
    <property type="evidence" value="ECO:0007669"/>
    <property type="project" value="UniProtKB-UniRule"/>
</dbReference>
<dbReference type="CDD" id="cd13646">
    <property type="entry name" value="PBP2_EcHMBS_like"/>
    <property type="match status" value="1"/>
</dbReference>
<dbReference type="FunFam" id="3.30.160.40:FF:000002">
    <property type="entry name" value="Porphobilinogen deaminase"/>
    <property type="match status" value="1"/>
</dbReference>
<dbReference type="FunFam" id="3.40.190.10:FF:000004">
    <property type="entry name" value="Porphobilinogen deaminase"/>
    <property type="match status" value="1"/>
</dbReference>
<dbReference type="FunFam" id="3.40.190.10:FF:000005">
    <property type="entry name" value="Porphobilinogen deaminase"/>
    <property type="match status" value="1"/>
</dbReference>
<dbReference type="Gene3D" id="3.40.190.10">
    <property type="entry name" value="Periplasmic binding protein-like II"/>
    <property type="match status" value="2"/>
</dbReference>
<dbReference type="Gene3D" id="3.30.160.40">
    <property type="entry name" value="Porphobilinogen deaminase, C-terminal domain"/>
    <property type="match status" value="1"/>
</dbReference>
<dbReference type="HAMAP" id="MF_00260">
    <property type="entry name" value="Porphobil_deam"/>
    <property type="match status" value="1"/>
</dbReference>
<dbReference type="InterPro" id="IPR000860">
    <property type="entry name" value="HemC"/>
</dbReference>
<dbReference type="InterPro" id="IPR022419">
    <property type="entry name" value="Porphobilin_deaminase_cofac_BS"/>
</dbReference>
<dbReference type="InterPro" id="IPR022417">
    <property type="entry name" value="Porphobilin_deaminase_N"/>
</dbReference>
<dbReference type="InterPro" id="IPR022418">
    <property type="entry name" value="Porphobilinogen_deaminase_C"/>
</dbReference>
<dbReference type="InterPro" id="IPR036803">
    <property type="entry name" value="Porphobilinogen_deaminase_C_sf"/>
</dbReference>
<dbReference type="NCBIfam" id="TIGR00212">
    <property type="entry name" value="hemC"/>
    <property type="match status" value="1"/>
</dbReference>
<dbReference type="PANTHER" id="PTHR11557">
    <property type="entry name" value="PORPHOBILINOGEN DEAMINASE"/>
    <property type="match status" value="1"/>
</dbReference>
<dbReference type="PANTHER" id="PTHR11557:SF0">
    <property type="entry name" value="PORPHOBILINOGEN DEAMINASE"/>
    <property type="match status" value="1"/>
</dbReference>
<dbReference type="Pfam" id="PF01379">
    <property type="entry name" value="Porphobil_deam"/>
    <property type="match status" value="1"/>
</dbReference>
<dbReference type="Pfam" id="PF03900">
    <property type="entry name" value="Porphobil_deamC"/>
    <property type="match status" value="1"/>
</dbReference>
<dbReference type="PIRSF" id="PIRSF001438">
    <property type="entry name" value="4pyrrol_synth_OHMeBilane_synth"/>
    <property type="match status" value="1"/>
</dbReference>
<dbReference type="PRINTS" id="PR00151">
    <property type="entry name" value="PORPHBDMNASE"/>
</dbReference>
<dbReference type="SUPFAM" id="SSF53850">
    <property type="entry name" value="Periplasmic binding protein-like II"/>
    <property type="match status" value="1"/>
</dbReference>
<dbReference type="SUPFAM" id="SSF54782">
    <property type="entry name" value="Porphobilinogen deaminase (hydroxymethylbilane synthase), C-terminal domain"/>
    <property type="match status" value="1"/>
</dbReference>
<dbReference type="PROSITE" id="PS00533">
    <property type="entry name" value="PORPHOBILINOGEN_DEAM"/>
    <property type="match status" value="1"/>
</dbReference>